<organism>
    <name type="scientific">Vanderwaltozyma polyspora (strain ATCC 22028 / DSM 70294 / BCRC 21397 / CBS 2163 / NBRC 10782 / NRRL Y-8283 / UCD 57-17)</name>
    <name type="common">Kluyveromyces polysporus</name>
    <dbReference type="NCBI Taxonomy" id="436907"/>
    <lineage>
        <taxon>Eukaryota</taxon>
        <taxon>Fungi</taxon>
        <taxon>Dikarya</taxon>
        <taxon>Ascomycota</taxon>
        <taxon>Saccharomycotina</taxon>
        <taxon>Saccharomycetes</taxon>
        <taxon>Saccharomycetales</taxon>
        <taxon>Saccharomycetaceae</taxon>
        <taxon>Vanderwaltozyma</taxon>
    </lineage>
</organism>
<evidence type="ECO:0000250" key="1"/>
<evidence type="ECO:0000305" key="2"/>
<keyword id="KW-0963">Cytoplasm</keyword>
<keyword id="KW-0539">Nucleus</keyword>
<keyword id="KW-1185">Reference proteome</keyword>
<proteinExistence type="inferred from homology"/>
<name>LOT5_VANPO</name>
<dbReference type="EMBL" id="DS480386">
    <property type="protein sequence ID" value="EDO18702.1"/>
    <property type="molecule type" value="Genomic_DNA"/>
</dbReference>
<dbReference type="RefSeq" id="XP_001646560.1">
    <property type="nucleotide sequence ID" value="XM_001646510.1"/>
</dbReference>
<dbReference type="FunCoup" id="A7TGD2">
    <property type="interactions" value="52"/>
</dbReference>
<dbReference type="STRING" id="436907.A7TGD2"/>
<dbReference type="GeneID" id="5547012"/>
<dbReference type="KEGG" id="vpo:Kpol_1055p59"/>
<dbReference type="eggNOG" id="ENOG502RY1I">
    <property type="taxonomic scope" value="Eukaryota"/>
</dbReference>
<dbReference type="HOGENOM" id="CLU_073622_0_0_1"/>
<dbReference type="InParanoid" id="A7TGD2"/>
<dbReference type="OMA" id="NSCIIIW"/>
<dbReference type="OrthoDB" id="19714at2759"/>
<dbReference type="PhylomeDB" id="A7TGD2"/>
<dbReference type="Proteomes" id="UP000000267">
    <property type="component" value="Unassembled WGS sequence"/>
</dbReference>
<dbReference type="GO" id="GO:0005737">
    <property type="term" value="C:cytoplasm"/>
    <property type="evidence" value="ECO:0007669"/>
    <property type="project" value="UniProtKB-SubCell"/>
</dbReference>
<dbReference type="GO" id="GO:0005634">
    <property type="term" value="C:nucleus"/>
    <property type="evidence" value="ECO:0007669"/>
    <property type="project" value="UniProtKB-SubCell"/>
</dbReference>
<dbReference type="InterPro" id="IPR039924">
    <property type="entry name" value="ICln/Lot5/Saf5"/>
</dbReference>
<dbReference type="Pfam" id="PF03517">
    <property type="entry name" value="Voldacs"/>
    <property type="match status" value="1"/>
</dbReference>
<comment type="subcellular location">
    <subcellularLocation>
        <location evidence="1">Cytoplasm</location>
    </subcellularLocation>
    <subcellularLocation>
        <location evidence="1">Nucleus</location>
    </subcellularLocation>
</comment>
<comment type="similarity">
    <text evidence="2">Belongs to the LOT5 family.</text>
</comment>
<accession>A7TGD2</accession>
<feature type="chain" id="PRO_0000324402" description="Protein LOT5">
    <location>
        <begin position="1"/>
        <end position="306"/>
    </location>
</feature>
<gene>
    <name type="primary">LOT5</name>
    <name type="ORF">Kpol_1055p59</name>
</gene>
<protein>
    <recommendedName>
        <fullName>Protein LOT5</fullName>
    </recommendedName>
</protein>
<reference key="1">
    <citation type="journal article" date="2007" name="Proc. Natl. Acad. Sci. U.S.A.">
        <title>Independent sorting-out of thousands of duplicated gene pairs in two yeast species descended from a whole-genome duplication.</title>
        <authorList>
            <person name="Scannell D.R."/>
            <person name="Frank A.C."/>
            <person name="Conant G.C."/>
            <person name="Byrne K.P."/>
            <person name="Woolfit M."/>
            <person name="Wolfe K.H."/>
        </authorList>
    </citation>
    <scope>NUCLEOTIDE SEQUENCE [LARGE SCALE GENOMIC DNA]</scope>
    <source>
        <strain>ATCC 22028 / DSM 70294 / BCRC 21397 / CBS 2163 / NBRC 10782 / NRRL Y-8283 / UCD 57-17</strain>
    </source>
</reference>
<sequence length="306" mass="35074">MIAKECKPITREASIKPSIENVIPYNEYKKTQPRILGVPQVIQGTNDDDMIVLYGGGRDFILSLLDNEINSNKENGINSINVELFILNKCILMWFKDLGRGIEISYNSVIYHGSNRIQGEDSRDGHRYELVVTVERDLILNELFPVYGEEHSDALSKFSLRSVEFKLRPRYSTYDRYYNVEIETLFTFHNFGVNRGDEMVKNCNDAIALCLEMNENQFISSEEEDLDVETSAYDNEQNTMNQDSNSAVYTGINEVYNTYQNSGYGDDLDGNNMIMDNKFMKNGVEAGMSMEFYNNEAITGQKRPMS</sequence>